<sequence length="149" mass="16282">MTLAEEFRSRNFSIYGQWTGVICIILCLALGIANIFSFNAVRIVFSILCLVSGLILIFVEVPFLLRICPTSEKFDNFIRRFTTNWMRAAMYAIMSAVQWVSLVSGASGLIAAAVLLLIAALFYALAGLKSQDFVGSKTLGGQGIAQMIV</sequence>
<reference key="1">
    <citation type="submission" date="2005-09" db="EMBL/GenBank/DDBJ databases">
        <title>Annotation of the Aspergillus terreus NIH2624 genome.</title>
        <authorList>
            <person name="Birren B.W."/>
            <person name="Lander E.S."/>
            <person name="Galagan J.E."/>
            <person name="Nusbaum C."/>
            <person name="Devon K."/>
            <person name="Henn M."/>
            <person name="Ma L.-J."/>
            <person name="Jaffe D.B."/>
            <person name="Butler J."/>
            <person name="Alvarez P."/>
            <person name="Gnerre S."/>
            <person name="Grabherr M."/>
            <person name="Kleber M."/>
            <person name="Mauceli E.W."/>
            <person name="Brockman W."/>
            <person name="Rounsley S."/>
            <person name="Young S.K."/>
            <person name="LaButti K."/>
            <person name="Pushparaj V."/>
            <person name="DeCaprio D."/>
            <person name="Crawford M."/>
            <person name="Koehrsen M."/>
            <person name="Engels R."/>
            <person name="Montgomery P."/>
            <person name="Pearson M."/>
            <person name="Howarth C."/>
            <person name="Larson L."/>
            <person name="Luoma S."/>
            <person name="White J."/>
            <person name="Alvarado L."/>
            <person name="Kodira C.D."/>
            <person name="Zeng Q."/>
            <person name="Oleary S."/>
            <person name="Yandava C."/>
            <person name="Denning D.W."/>
            <person name="Nierman W.C."/>
            <person name="Milne T."/>
            <person name="Madden K."/>
        </authorList>
    </citation>
    <scope>NUCLEOTIDE SEQUENCE [LARGE SCALE GENOMIC DNA]</scope>
    <source>
        <strain>NIH 2624 / FGSC A1156</strain>
    </source>
</reference>
<proteinExistence type="inferred from homology"/>
<name>TVP18_ASPTN</name>
<organism>
    <name type="scientific">Aspergillus terreus (strain NIH 2624 / FGSC A1156)</name>
    <dbReference type="NCBI Taxonomy" id="341663"/>
    <lineage>
        <taxon>Eukaryota</taxon>
        <taxon>Fungi</taxon>
        <taxon>Dikarya</taxon>
        <taxon>Ascomycota</taxon>
        <taxon>Pezizomycotina</taxon>
        <taxon>Eurotiomycetes</taxon>
        <taxon>Eurotiomycetidae</taxon>
        <taxon>Eurotiales</taxon>
        <taxon>Aspergillaceae</taxon>
        <taxon>Aspergillus</taxon>
        <taxon>Aspergillus subgen. Circumdati</taxon>
    </lineage>
</organism>
<gene>
    <name type="primary">tvp18</name>
    <name type="ORF">ATEG_04589</name>
</gene>
<keyword id="KW-0325">Glycoprotein</keyword>
<keyword id="KW-0333">Golgi apparatus</keyword>
<keyword id="KW-0472">Membrane</keyword>
<keyword id="KW-1185">Reference proteome</keyword>
<keyword id="KW-0812">Transmembrane</keyword>
<keyword id="KW-1133">Transmembrane helix</keyword>
<feature type="chain" id="PRO_0000343013" description="Golgi apparatus membrane protein tvp18">
    <location>
        <begin position="1"/>
        <end position="149"/>
    </location>
</feature>
<feature type="transmembrane region" description="Helical" evidence="2">
    <location>
        <begin position="12"/>
        <end position="32"/>
    </location>
</feature>
<feature type="transmembrane region" description="Helical" evidence="2">
    <location>
        <begin position="39"/>
        <end position="59"/>
    </location>
</feature>
<feature type="transmembrane region" description="Helical" evidence="2">
    <location>
        <begin position="81"/>
        <end position="98"/>
    </location>
</feature>
<feature type="transmembrane region" description="Helical" evidence="2">
    <location>
        <begin position="104"/>
        <end position="124"/>
    </location>
</feature>
<feature type="glycosylation site" description="N-linked (GlcNAc...) asparagine" evidence="2">
    <location>
        <position position="11"/>
    </location>
</feature>
<accession>Q0CNZ5</accession>
<dbReference type="EMBL" id="CH476599">
    <property type="protein sequence ID" value="EAU35036.1"/>
    <property type="status" value="ALT_SEQ"/>
    <property type="molecule type" value="Genomic_DNA"/>
</dbReference>
<dbReference type="RefSeq" id="XP_001213767.1">
    <property type="nucleotide sequence ID" value="XM_001213767.1"/>
</dbReference>
<dbReference type="STRING" id="341663.Q0CNZ5"/>
<dbReference type="GlyCosmos" id="Q0CNZ5">
    <property type="glycosylation" value="1 site, No reported glycans"/>
</dbReference>
<dbReference type="EnsemblFungi" id="EAU35036">
    <property type="protein sequence ID" value="EAU35036"/>
    <property type="gene ID" value="ATEG_04589"/>
</dbReference>
<dbReference type="GeneID" id="4319875"/>
<dbReference type="eggNOG" id="ENOG502S3AC">
    <property type="taxonomic scope" value="Eukaryota"/>
</dbReference>
<dbReference type="OrthoDB" id="5591789at2759"/>
<dbReference type="Proteomes" id="UP000007963">
    <property type="component" value="Unassembled WGS sequence"/>
</dbReference>
<dbReference type="GO" id="GO:0000139">
    <property type="term" value="C:Golgi membrane"/>
    <property type="evidence" value="ECO:0007669"/>
    <property type="project" value="UniProtKB-SubCell"/>
</dbReference>
<dbReference type="GO" id="GO:0016192">
    <property type="term" value="P:vesicle-mediated transport"/>
    <property type="evidence" value="ECO:0007669"/>
    <property type="project" value="TreeGrafter"/>
</dbReference>
<dbReference type="InterPro" id="IPR019365">
    <property type="entry name" value="TVP18/Ca-channel_flower"/>
</dbReference>
<dbReference type="PANTHER" id="PTHR13314">
    <property type="entry name" value="CALCIUM CHANNEL FLOWER HOMOLOG"/>
    <property type="match status" value="1"/>
</dbReference>
<dbReference type="PANTHER" id="PTHR13314:SF2">
    <property type="entry name" value="CALCIUM CHANNEL FLOWER HOMOLOG"/>
    <property type="match status" value="1"/>
</dbReference>
<dbReference type="Pfam" id="PF10233">
    <property type="entry name" value="Cg6151-P"/>
    <property type="match status" value="1"/>
</dbReference>
<dbReference type="SMART" id="SM01077">
    <property type="entry name" value="Cg6151-P"/>
    <property type="match status" value="1"/>
</dbReference>
<comment type="function">
    <text evidence="1">Golgi membrane protein involved in vesicular trafficking.</text>
</comment>
<comment type="subcellular location">
    <subcellularLocation>
        <location evidence="1">Golgi apparatus membrane</location>
        <topology evidence="1">Multi-pass membrane protein</topology>
    </subcellularLocation>
</comment>
<comment type="similarity">
    <text evidence="3">Belongs to the TVP18 family.</text>
</comment>
<comment type="sequence caution" evidence="3">
    <conflict type="erroneous gene model prediction">
        <sequence resource="EMBL-CDS" id="EAU35036"/>
    </conflict>
</comment>
<protein>
    <recommendedName>
        <fullName>Golgi apparatus membrane protein tvp18</fullName>
    </recommendedName>
</protein>
<evidence type="ECO:0000250" key="1"/>
<evidence type="ECO:0000255" key="2"/>
<evidence type="ECO:0000305" key="3"/>